<evidence type="ECO:0000250" key="1"/>
<evidence type="ECO:0000250" key="2">
    <source>
        <dbReference type="UniProtKB" id="Q5EHP3"/>
    </source>
</evidence>
<evidence type="ECO:0000255" key="3"/>
<evidence type="ECO:0000305" key="4"/>
<evidence type="ECO:0000305" key="5">
    <source>
    </source>
</evidence>
<feature type="signal peptide" evidence="3">
    <location>
        <begin position="1"/>
        <end position="17"/>
    </location>
</feature>
<feature type="propeptide" id="PRO_0000404878" evidence="1">
    <location>
        <begin position="18"/>
        <end position="51"/>
    </location>
</feature>
<feature type="peptide" id="PRO_0000404879" description="Conotoxin PnMLKM-011">
    <location>
        <begin position="52"/>
        <end position="67"/>
    </location>
</feature>
<feature type="modified residue" description="Leucine amide" evidence="1">
    <location>
        <position position="67"/>
    </location>
</feature>
<feature type="disulfide bond" evidence="2">
    <location>
        <begin position="53"/>
        <end position="65"/>
    </location>
</feature>
<feature type="disulfide bond" evidence="2">
    <location>
        <begin position="54"/>
        <end position="63"/>
    </location>
</feature>
<feature type="disulfide bond" evidence="2">
    <location>
        <begin position="59"/>
        <end position="66"/>
    </location>
</feature>
<proteinExistence type="inferred from homology"/>
<name>CM31_CONPE</name>
<protein>
    <recommendedName>
        <fullName>Conotoxin PnMLKM-011</fullName>
    </recommendedName>
</protein>
<sequence>MGVVLFIFLVLFPLATLQLDPDQPVERYAENKQLLNPDERRGIILHALGQRVCCPPESCTDRCLCCLG</sequence>
<reference key="1">
    <citation type="journal article" date="2001" name="Mol. Biol. Evol.">
        <title>Mechanisms for evolving hypervariability: the case of conopeptides.</title>
        <authorList>
            <person name="Conticello S.G."/>
            <person name="Gilad Y."/>
            <person name="Avidan N."/>
            <person name="Ben-Asher E."/>
            <person name="Levy Z."/>
            <person name="Fainzilber M."/>
        </authorList>
    </citation>
    <scope>NUCLEOTIDE SEQUENCE [MRNA]</scope>
    <source>
        <tissue>Venom duct</tissue>
    </source>
</reference>
<accession>Q9BPI1</accession>
<organism>
    <name type="scientific">Conus pennaceus</name>
    <name type="common">Feathered cone</name>
    <name type="synonym">Conus episcopus</name>
    <dbReference type="NCBI Taxonomy" id="37335"/>
    <lineage>
        <taxon>Eukaryota</taxon>
        <taxon>Metazoa</taxon>
        <taxon>Spiralia</taxon>
        <taxon>Lophotrochozoa</taxon>
        <taxon>Mollusca</taxon>
        <taxon>Gastropoda</taxon>
        <taxon>Caenogastropoda</taxon>
        <taxon>Neogastropoda</taxon>
        <taxon>Conoidea</taxon>
        <taxon>Conidae</taxon>
        <taxon>Conus</taxon>
        <taxon>Darioconus</taxon>
    </lineage>
</organism>
<comment type="subcellular location">
    <subcellularLocation>
        <location evidence="4">Secreted</location>
    </subcellularLocation>
</comment>
<comment type="tissue specificity">
    <text evidence="5">Expressed by the venom duct.</text>
</comment>
<comment type="domain">
    <text evidence="4">The cysteine framework is III (CC-C-C-CC). Classified in the M-1 branch, since 1 residue stands between the fourth and the fifth cysteine residues.</text>
</comment>
<comment type="similarity">
    <text evidence="4">Belongs to the conotoxin M superfamily.</text>
</comment>
<dbReference type="EMBL" id="AF214943">
    <property type="protein sequence ID" value="AAG60371.1"/>
    <property type="molecule type" value="mRNA"/>
</dbReference>
<dbReference type="SMR" id="Q9BPI1"/>
<dbReference type="ConoServer" id="630">
    <property type="toxin name" value="Pn3.1 precursor"/>
</dbReference>
<dbReference type="GO" id="GO:0005576">
    <property type="term" value="C:extracellular region"/>
    <property type="evidence" value="ECO:0007669"/>
    <property type="project" value="UniProtKB-SubCell"/>
</dbReference>
<dbReference type="GO" id="GO:0008200">
    <property type="term" value="F:ion channel inhibitor activity"/>
    <property type="evidence" value="ECO:0007669"/>
    <property type="project" value="InterPro"/>
</dbReference>
<dbReference type="GO" id="GO:0090729">
    <property type="term" value="F:toxin activity"/>
    <property type="evidence" value="ECO:0007669"/>
    <property type="project" value="UniProtKB-KW"/>
</dbReference>
<dbReference type="InterPro" id="IPR004214">
    <property type="entry name" value="Conotoxin"/>
</dbReference>
<dbReference type="Pfam" id="PF02950">
    <property type="entry name" value="Conotoxin"/>
    <property type="match status" value="1"/>
</dbReference>
<keyword id="KW-0027">Amidation</keyword>
<keyword id="KW-1015">Disulfide bond</keyword>
<keyword id="KW-0528">Neurotoxin</keyword>
<keyword id="KW-0964">Secreted</keyword>
<keyword id="KW-0732">Signal</keyword>
<keyword id="KW-0800">Toxin</keyword>